<feature type="chain" id="PRO_1000014017" description="Glucose-6-phosphate isomerase">
    <location>
        <begin position="1"/>
        <end position="545"/>
    </location>
</feature>
<feature type="active site" description="Proton donor" evidence="1">
    <location>
        <position position="351"/>
    </location>
</feature>
<feature type="active site" evidence="1">
    <location>
        <position position="382"/>
    </location>
</feature>
<feature type="active site" evidence="1">
    <location>
        <position position="510"/>
    </location>
</feature>
<keyword id="KW-0963">Cytoplasm</keyword>
<keyword id="KW-0312">Gluconeogenesis</keyword>
<keyword id="KW-0324">Glycolysis</keyword>
<keyword id="KW-0413">Isomerase</keyword>
<evidence type="ECO:0000255" key="1">
    <source>
        <dbReference type="HAMAP-Rule" id="MF_00473"/>
    </source>
</evidence>
<reference key="1">
    <citation type="submission" date="2006-09" db="EMBL/GenBank/DDBJ databases">
        <title>Complete sequence of chromosome 1 of Shewanella sp. ANA-3.</title>
        <authorList>
            <person name="Copeland A."/>
            <person name="Lucas S."/>
            <person name="Lapidus A."/>
            <person name="Barry K."/>
            <person name="Detter J.C."/>
            <person name="Glavina del Rio T."/>
            <person name="Hammon N."/>
            <person name="Israni S."/>
            <person name="Dalin E."/>
            <person name="Tice H."/>
            <person name="Pitluck S."/>
            <person name="Chertkov O."/>
            <person name="Brettin T."/>
            <person name="Bruce D."/>
            <person name="Han C."/>
            <person name="Tapia R."/>
            <person name="Gilna P."/>
            <person name="Schmutz J."/>
            <person name="Larimer F."/>
            <person name="Land M."/>
            <person name="Hauser L."/>
            <person name="Kyrpides N."/>
            <person name="Kim E."/>
            <person name="Newman D."/>
            <person name="Salticov C."/>
            <person name="Konstantinidis K."/>
            <person name="Klappenback J."/>
            <person name="Tiedje J."/>
            <person name="Richardson P."/>
        </authorList>
    </citation>
    <scope>NUCLEOTIDE SEQUENCE [LARGE SCALE GENOMIC DNA]</scope>
    <source>
        <strain>ANA-3</strain>
    </source>
</reference>
<protein>
    <recommendedName>
        <fullName evidence="1">Glucose-6-phosphate isomerase</fullName>
        <shortName evidence="1">GPI</shortName>
        <ecNumber evidence="1">5.3.1.9</ecNumber>
    </recommendedName>
    <alternativeName>
        <fullName evidence="1">Phosphoglucose isomerase</fullName>
        <shortName evidence="1">PGI</shortName>
    </alternativeName>
    <alternativeName>
        <fullName evidence="1">Phosphohexose isomerase</fullName>
        <shortName evidence="1">PHI</shortName>
    </alternativeName>
</protein>
<name>G6PI_SHESA</name>
<gene>
    <name evidence="1" type="primary">pgi</name>
    <name type="ordered locus">Shewana3_3148</name>
</gene>
<accession>A0L003</accession>
<proteinExistence type="inferred from homology"/>
<organism>
    <name type="scientific">Shewanella sp. (strain ANA-3)</name>
    <dbReference type="NCBI Taxonomy" id="94122"/>
    <lineage>
        <taxon>Bacteria</taxon>
        <taxon>Pseudomonadati</taxon>
        <taxon>Pseudomonadota</taxon>
        <taxon>Gammaproteobacteria</taxon>
        <taxon>Alteromonadales</taxon>
        <taxon>Shewanellaceae</taxon>
        <taxon>Shewanella</taxon>
    </lineage>
</organism>
<comment type="function">
    <text evidence="1">Catalyzes the reversible isomerization of glucose-6-phosphate to fructose-6-phosphate.</text>
</comment>
<comment type="catalytic activity">
    <reaction evidence="1">
        <text>alpha-D-glucose 6-phosphate = beta-D-fructose 6-phosphate</text>
        <dbReference type="Rhea" id="RHEA:11816"/>
        <dbReference type="ChEBI" id="CHEBI:57634"/>
        <dbReference type="ChEBI" id="CHEBI:58225"/>
        <dbReference type="EC" id="5.3.1.9"/>
    </reaction>
</comment>
<comment type="pathway">
    <text evidence="1">Carbohydrate biosynthesis; gluconeogenesis.</text>
</comment>
<comment type="pathway">
    <text evidence="1">Carbohydrate degradation; glycolysis; D-glyceraldehyde 3-phosphate and glycerone phosphate from D-glucose: step 2/4.</text>
</comment>
<comment type="subcellular location">
    <subcellularLocation>
        <location evidence="1">Cytoplasm</location>
    </subcellularLocation>
</comment>
<comment type="similarity">
    <text evidence="1">Belongs to the GPI family.</text>
</comment>
<dbReference type="EC" id="5.3.1.9" evidence="1"/>
<dbReference type="EMBL" id="CP000469">
    <property type="protein sequence ID" value="ABK49372.1"/>
    <property type="molecule type" value="Genomic_DNA"/>
</dbReference>
<dbReference type="RefSeq" id="WP_011717973.1">
    <property type="nucleotide sequence ID" value="NC_008577.1"/>
</dbReference>
<dbReference type="SMR" id="A0L003"/>
<dbReference type="STRING" id="94122.Shewana3_3148"/>
<dbReference type="KEGG" id="shn:Shewana3_3148"/>
<dbReference type="eggNOG" id="COG0166">
    <property type="taxonomic scope" value="Bacteria"/>
</dbReference>
<dbReference type="HOGENOM" id="CLU_017947_3_1_6"/>
<dbReference type="OrthoDB" id="140919at2"/>
<dbReference type="UniPathway" id="UPA00109">
    <property type="reaction ID" value="UER00181"/>
</dbReference>
<dbReference type="UniPathway" id="UPA00138"/>
<dbReference type="Proteomes" id="UP000002589">
    <property type="component" value="Chromosome"/>
</dbReference>
<dbReference type="GO" id="GO:0005829">
    <property type="term" value="C:cytosol"/>
    <property type="evidence" value="ECO:0007669"/>
    <property type="project" value="TreeGrafter"/>
</dbReference>
<dbReference type="GO" id="GO:0097367">
    <property type="term" value="F:carbohydrate derivative binding"/>
    <property type="evidence" value="ECO:0007669"/>
    <property type="project" value="InterPro"/>
</dbReference>
<dbReference type="GO" id="GO:0004347">
    <property type="term" value="F:glucose-6-phosphate isomerase activity"/>
    <property type="evidence" value="ECO:0007669"/>
    <property type="project" value="UniProtKB-UniRule"/>
</dbReference>
<dbReference type="GO" id="GO:0048029">
    <property type="term" value="F:monosaccharide binding"/>
    <property type="evidence" value="ECO:0007669"/>
    <property type="project" value="TreeGrafter"/>
</dbReference>
<dbReference type="GO" id="GO:0006094">
    <property type="term" value="P:gluconeogenesis"/>
    <property type="evidence" value="ECO:0007669"/>
    <property type="project" value="UniProtKB-UniRule"/>
</dbReference>
<dbReference type="GO" id="GO:0051156">
    <property type="term" value="P:glucose 6-phosphate metabolic process"/>
    <property type="evidence" value="ECO:0007669"/>
    <property type="project" value="TreeGrafter"/>
</dbReference>
<dbReference type="GO" id="GO:0006096">
    <property type="term" value="P:glycolytic process"/>
    <property type="evidence" value="ECO:0007669"/>
    <property type="project" value="UniProtKB-UniRule"/>
</dbReference>
<dbReference type="CDD" id="cd05015">
    <property type="entry name" value="SIS_PGI_1"/>
    <property type="match status" value="1"/>
</dbReference>
<dbReference type="CDD" id="cd05016">
    <property type="entry name" value="SIS_PGI_2"/>
    <property type="match status" value="1"/>
</dbReference>
<dbReference type="FunFam" id="3.40.50.10490:FF:000018">
    <property type="entry name" value="Glucose-6-phosphate isomerase"/>
    <property type="match status" value="1"/>
</dbReference>
<dbReference type="Gene3D" id="1.10.1390.10">
    <property type="match status" value="1"/>
</dbReference>
<dbReference type="Gene3D" id="3.40.50.10490">
    <property type="entry name" value="Glucose-6-phosphate isomerase like protein, domain 1"/>
    <property type="match status" value="2"/>
</dbReference>
<dbReference type="HAMAP" id="MF_00473">
    <property type="entry name" value="G6P_isomerase"/>
    <property type="match status" value="1"/>
</dbReference>
<dbReference type="InterPro" id="IPR001672">
    <property type="entry name" value="G6P_Isomerase"/>
</dbReference>
<dbReference type="InterPro" id="IPR023096">
    <property type="entry name" value="G6P_Isomerase_C"/>
</dbReference>
<dbReference type="InterPro" id="IPR018189">
    <property type="entry name" value="Phosphoglucose_isomerase_CS"/>
</dbReference>
<dbReference type="InterPro" id="IPR046348">
    <property type="entry name" value="SIS_dom_sf"/>
</dbReference>
<dbReference type="InterPro" id="IPR035476">
    <property type="entry name" value="SIS_PGI_1"/>
</dbReference>
<dbReference type="InterPro" id="IPR035482">
    <property type="entry name" value="SIS_PGI_2"/>
</dbReference>
<dbReference type="NCBIfam" id="NF001211">
    <property type="entry name" value="PRK00179.1"/>
    <property type="match status" value="1"/>
</dbReference>
<dbReference type="PANTHER" id="PTHR11469">
    <property type="entry name" value="GLUCOSE-6-PHOSPHATE ISOMERASE"/>
    <property type="match status" value="1"/>
</dbReference>
<dbReference type="PANTHER" id="PTHR11469:SF1">
    <property type="entry name" value="GLUCOSE-6-PHOSPHATE ISOMERASE"/>
    <property type="match status" value="1"/>
</dbReference>
<dbReference type="Pfam" id="PF00342">
    <property type="entry name" value="PGI"/>
    <property type="match status" value="1"/>
</dbReference>
<dbReference type="PRINTS" id="PR00662">
    <property type="entry name" value="G6PISOMERASE"/>
</dbReference>
<dbReference type="SUPFAM" id="SSF53697">
    <property type="entry name" value="SIS domain"/>
    <property type="match status" value="1"/>
</dbReference>
<dbReference type="PROSITE" id="PS00765">
    <property type="entry name" value="P_GLUCOSE_ISOMERASE_1"/>
    <property type="match status" value="1"/>
</dbReference>
<dbReference type="PROSITE" id="PS00174">
    <property type="entry name" value="P_GLUCOSE_ISOMERASE_2"/>
    <property type="match status" value="1"/>
</dbReference>
<dbReference type="PROSITE" id="PS51463">
    <property type="entry name" value="P_GLUCOSE_ISOMERASE_3"/>
    <property type="match status" value="1"/>
</dbReference>
<sequence length="545" mass="59693">MTILTQSTTWQALAAHSQQIPHMRELFASDPARFSNMSLSTCGLFLDYSKNRATPETLNLLLTLAQEAKLDAKIKAMFAGDIINTTEKRAVLHTALRSTAEQTIIAEGQDIVPEVQQTLNKMQQFVTSVTSGQWKGFTGKTITDIVSIGIGGSFLGPKIVSQALRPYWMTGLNCHFVANVDGTSISEKLKLLDPETTLFIMSSKSFGTQETLTNTLTAKAWFLAKGGSQSDVAKHFVAVTSNVAKATDFGIDADNIFPMWDWVGGRYSLWSAIGLPIALLIGMDNFRSLLKGAHQMDTHFANAPLAENMPVIMGLFSLWYGNFFNAQSHVVLTYDHYLRGLPAYFQQLDMESNGKSVTLNGTHVDYSTGPVIWGGEGTNGQHAYHQLLHQGTALIPADFIMPLQSHNPIGEHHDQLASNCFGQTQALMQGRTLDEALAELSKSNLSDEEKLLIAKHKVMPGNKPSNTLLMDKLTPETLGALIALYEHRTFVQGAIWDINSFDQWGVELGKSLGNDVLARIGAEQDATALDASSNGLINLYRQGKI</sequence>